<gene>
    <name evidence="7" type="ordered locus">At1g80290</name>
    <name evidence="8" type="ORF">F5I6.4</name>
</gene>
<comment type="function">
    <text evidence="1">Probable glycosyltransferase.</text>
</comment>
<comment type="cofactor">
    <cofactor evidence="2">
        <name>Mn(2+)</name>
        <dbReference type="ChEBI" id="CHEBI:29035"/>
    </cofactor>
</comment>
<comment type="pathway">
    <text evidence="6">Protein modification; protein glycosylation.</text>
</comment>
<comment type="alternative products">
    <event type="alternative splicing"/>
    <isoform>
        <id>Q9C975-1</id>
        <name>1</name>
        <sequence type="displayed"/>
    </isoform>
    <isoform>
        <id>Q9C975-2</id>
        <name>2</name>
        <sequence type="described" ref="VSP_057105"/>
    </isoform>
</comment>
<comment type="similarity">
    <text evidence="6">Belongs to the glycosyltransferase 64 family.</text>
</comment>
<comment type="online information" name="CAZY, the Carbohydrate Active enZYmes database">
    <link uri="https://www.cazy.org/GT64_all.html"/>
</comment>
<dbReference type="EC" id="2.4.1.-" evidence="6"/>
<dbReference type="EMBL" id="AC018848">
    <property type="protein sequence ID" value="AAG52433.1"/>
    <property type="molecule type" value="Genomic_DNA"/>
</dbReference>
<dbReference type="EMBL" id="CP002684">
    <property type="protein sequence ID" value="AEE36383.1"/>
    <property type="molecule type" value="Genomic_DNA"/>
</dbReference>
<dbReference type="EMBL" id="CP002684">
    <property type="protein sequence ID" value="AEE36384.1"/>
    <property type="molecule type" value="Genomic_DNA"/>
</dbReference>
<dbReference type="EMBL" id="AK317465">
    <property type="protein sequence ID" value="BAH20131.1"/>
    <property type="molecule type" value="mRNA"/>
</dbReference>
<dbReference type="EMBL" id="BT024721">
    <property type="protein sequence ID" value="ABD59059.1"/>
    <property type="molecule type" value="mRNA"/>
</dbReference>
<dbReference type="EMBL" id="AY084439">
    <property type="protein sequence ID" value="AAM61012.1"/>
    <property type="molecule type" value="mRNA"/>
</dbReference>
<dbReference type="PIR" id="D96834">
    <property type="entry name" value="D96834"/>
</dbReference>
<dbReference type="RefSeq" id="NP_001077854.1">
    <molecule id="Q9C975-2"/>
    <property type="nucleotide sequence ID" value="NM_001084385.1"/>
</dbReference>
<dbReference type="RefSeq" id="NP_565236.1">
    <molecule id="Q9C975-1"/>
    <property type="nucleotide sequence ID" value="NM_106678.3"/>
</dbReference>
<dbReference type="SMR" id="Q9C975"/>
<dbReference type="FunCoup" id="Q9C975">
    <property type="interactions" value="80"/>
</dbReference>
<dbReference type="STRING" id="3702.Q9C975"/>
<dbReference type="CAZy" id="GT64">
    <property type="family name" value="Glycosyltransferase Family 64"/>
</dbReference>
<dbReference type="GlyGen" id="Q9C975">
    <property type="glycosylation" value="1 site"/>
</dbReference>
<dbReference type="PaxDb" id="3702-AT1G80290.2"/>
<dbReference type="ProteomicsDB" id="247204">
    <molecule id="Q9C975-1"/>
</dbReference>
<dbReference type="EnsemblPlants" id="AT1G80290.1">
    <molecule id="Q9C975-1"/>
    <property type="protein sequence ID" value="AT1G80290.1"/>
    <property type="gene ID" value="AT1G80290"/>
</dbReference>
<dbReference type="EnsemblPlants" id="AT1G80290.2">
    <molecule id="Q9C975-2"/>
    <property type="protein sequence ID" value="AT1G80290.2"/>
    <property type="gene ID" value="AT1G80290"/>
</dbReference>
<dbReference type="GeneID" id="844369"/>
<dbReference type="Gramene" id="AT1G80290.1">
    <molecule id="Q9C975-1"/>
    <property type="protein sequence ID" value="AT1G80290.1"/>
    <property type="gene ID" value="AT1G80290"/>
</dbReference>
<dbReference type="Gramene" id="AT1G80290.2">
    <molecule id="Q9C975-2"/>
    <property type="protein sequence ID" value="AT1G80290.2"/>
    <property type="gene ID" value="AT1G80290"/>
</dbReference>
<dbReference type="KEGG" id="ath:AT1G80290"/>
<dbReference type="Araport" id="AT1G80290"/>
<dbReference type="TAIR" id="AT1G80290"/>
<dbReference type="eggNOG" id="KOG1021">
    <property type="taxonomic scope" value="Eukaryota"/>
</dbReference>
<dbReference type="HOGENOM" id="CLU_060636_0_0_1"/>
<dbReference type="InParanoid" id="Q9C975"/>
<dbReference type="PhylomeDB" id="Q9C975"/>
<dbReference type="BioCyc" id="ARA:AT1G80290-MONOMER"/>
<dbReference type="UniPathway" id="UPA00378"/>
<dbReference type="PRO" id="PR:Q9C975"/>
<dbReference type="Proteomes" id="UP000006548">
    <property type="component" value="Chromosome 1"/>
</dbReference>
<dbReference type="ExpressionAtlas" id="Q9C975">
    <property type="expression patterns" value="baseline and differential"/>
</dbReference>
<dbReference type="GO" id="GO:0016020">
    <property type="term" value="C:membrane"/>
    <property type="evidence" value="ECO:0007669"/>
    <property type="project" value="InterPro"/>
</dbReference>
<dbReference type="GO" id="GO:0016757">
    <property type="term" value="F:glycosyltransferase activity"/>
    <property type="evidence" value="ECO:0007669"/>
    <property type="project" value="InterPro"/>
</dbReference>
<dbReference type="GO" id="GO:0046872">
    <property type="term" value="F:metal ion binding"/>
    <property type="evidence" value="ECO:0007669"/>
    <property type="project" value="UniProtKB-KW"/>
</dbReference>
<dbReference type="GO" id="GO:0006486">
    <property type="term" value="P:protein glycosylation"/>
    <property type="evidence" value="ECO:0007669"/>
    <property type="project" value="UniProtKB-UniPathway"/>
</dbReference>
<dbReference type="FunFam" id="3.90.550.10:FF:000221">
    <property type="entry name" value="Glycosyltransferase family protein 47"/>
    <property type="match status" value="1"/>
</dbReference>
<dbReference type="Gene3D" id="3.90.550.10">
    <property type="entry name" value="Spore Coat Polysaccharide Biosynthesis Protein SpsA, Chain A"/>
    <property type="match status" value="1"/>
</dbReference>
<dbReference type="InterPro" id="IPR053318">
    <property type="entry name" value="GT64"/>
</dbReference>
<dbReference type="InterPro" id="IPR015338">
    <property type="entry name" value="GT64_dom"/>
</dbReference>
<dbReference type="InterPro" id="IPR029044">
    <property type="entry name" value="Nucleotide-diphossugar_trans"/>
</dbReference>
<dbReference type="PANTHER" id="PTHR48409">
    <property type="entry name" value="GLYCOSYLTRANSFERASE FAMILY PROTEIN 64 C3"/>
    <property type="match status" value="1"/>
</dbReference>
<dbReference type="PANTHER" id="PTHR48409:SF1">
    <property type="entry name" value="GLYCOSYLTRANSFERASE FAMILY PROTEIN 64 C3"/>
    <property type="match status" value="1"/>
</dbReference>
<dbReference type="Pfam" id="PF09258">
    <property type="entry name" value="Glyco_transf_64"/>
    <property type="match status" value="1"/>
</dbReference>
<dbReference type="SUPFAM" id="SSF53448">
    <property type="entry name" value="Nucleotide-diphospho-sugar transferases"/>
    <property type="match status" value="1"/>
</dbReference>
<feature type="signal peptide" evidence="3">
    <location>
        <begin position="1"/>
        <end position="27"/>
    </location>
</feature>
<feature type="chain" id="PRO_0000430882" description="Glycosyltransferase family protein 64 C3" evidence="3">
    <location>
        <begin position="28"/>
        <end position="329"/>
    </location>
</feature>
<feature type="region of interest" description="Substrate binding" evidence="2">
    <location>
        <begin position="268"/>
        <end position="284"/>
    </location>
</feature>
<feature type="active site" evidence="2">
    <location>
        <position position="230"/>
    </location>
</feature>
<feature type="binding site" evidence="2">
    <location>
        <begin position="118"/>
        <end position="123"/>
    </location>
    <ligand>
        <name>substrate</name>
    </ligand>
</feature>
<feature type="binding site" evidence="2">
    <location>
        <begin position="139"/>
        <end position="141"/>
    </location>
    <ligand>
        <name>substrate</name>
    </ligand>
</feature>
<feature type="binding site" evidence="2">
    <location>
        <position position="141"/>
    </location>
    <ligand>
        <name>Mn(2+)</name>
        <dbReference type="ChEBI" id="CHEBI:29035"/>
        <note>catalytic</note>
    </ligand>
</feature>
<feature type="binding site" evidence="2">
    <location>
        <position position="169"/>
    </location>
    <ligand>
        <name>substrate</name>
    </ligand>
</feature>
<feature type="binding site" evidence="2">
    <location>
        <begin position="226"/>
        <end position="230"/>
    </location>
    <ligand>
        <name>substrate</name>
    </ligand>
</feature>
<feature type="binding site" evidence="2">
    <location>
        <begin position="271"/>
        <end position="284"/>
    </location>
    <ligand>
        <name>substrate</name>
    </ligand>
</feature>
<feature type="glycosylation site" description="N-linked (GlcNAc...) asparagine" evidence="4">
    <location>
        <position position="99"/>
    </location>
</feature>
<feature type="disulfide bond" evidence="2">
    <location>
        <begin position="228"/>
        <end position="287"/>
    </location>
</feature>
<feature type="splice variant" id="VSP_057105" description="In isoform 2.">
    <original>M</original>
    <variation>MPSASEADM</variation>
    <location>
        <position position="1"/>
    </location>
</feature>
<feature type="sequence conflict" description="In Ref. 5; AAM61012." ref="5">
    <original>S</original>
    <variation>R</variation>
    <location>
        <position position="87"/>
    </location>
</feature>
<sequence length="329" mass="37703">MGVKSVRFSIWFLFVVTDLVFCRTLSGDPDPCDATNQREFQKLRSDQITVLINGYSEYRIPLLQTIVASYSSSSIVSSILVLWGNPSTPDQLLDQLYQNLTQYSPGSASISLIQQSSSSLNARFLPRSSVDTRAVLICDDDVEIDQRSLEFAFSVWKSNPDRLVGTFVRSHGFDLQGKEWIYTVHPDKYSIVLTKFMMMKQDYLFEYSCKGGVEMEEMRMIVDQMRNCEDILMNFVAADRLRAGPIMVGAERVRDWGDARNEEVEERVRDVGLSSRRVEHRKRRGNCIREFHRVMGKMPLMYSYGKVVNSVGEQGLCRKAGKLVFCDRD</sequence>
<evidence type="ECO:0000250" key="1"/>
<evidence type="ECO:0000250" key="2">
    <source>
        <dbReference type="UniProtKB" id="Q9ES89"/>
    </source>
</evidence>
<evidence type="ECO:0000255" key="3"/>
<evidence type="ECO:0000255" key="4">
    <source>
        <dbReference type="PROSITE-ProRule" id="PRU00498"/>
    </source>
</evidence>
<evidence type="ECO:0000303" key="5">
    <source>
    </source>
</evidence>
<evidence type="ECO:0000305" key="6"/>
<evidence type="ECO:0000312" key="7">
    <source>
        <dbReference type="Araport" id="AT1G80290"/>
    </source>
</evidence>
<evidence type="ECO:0000312" key="8">
    <source>
        <dbReference type="EMBL" id="AAG52433.1"/>
    </source>
</evidence>
<evidence type="ECO:0000312" key="9">
    <source>
        <dbReference type="Proteomes" id="UP000006548"/>
    </source>
</evidence>
<accession>Q9C975</accession>
<accession>F4HS52</accession>
<accession>Q8LG66</accession>
<keyword id="KW-0025">Alternative splicing</keyword>
<keyword id="KW-1015">Disulfide bond</keyword>
<keyword id="KW-0325">Glycoprotein</keyword>
<keyword id="KW-0464">Manganese</keyword>
<keyword id="KW-0479">Metal-binding</keyword>
<keyword id="KW-1185">Reference proteome</keyword>
<keyword id="KW-0732">Signal</keyword>
<keyword id="KW-0808">Transferase</keyword>
<proteinExistence type="evidence at transcript level"/>
<reference key="1">
    <citation type="journal article" date="2000" name="Nature">
        <title>Sequence and analysis of chromosome 1 of the plant Arabidopsis thaliana.</title>
        <authorList>
            <person name="Theologis A."/>
            <person name="Ecker J.R."/>
            <person name="Palm C.J."/>
            <person name="Federspiel N.A."/>
            <person name="Kaul S."/>
            <person name="White O."/>
            <person name="Alonso J."/>
            <person name="Altafi H."/>
            <person name="Araujo R."/>
            <person name="Bowman C.L."/>
            <person name="Brooks S.Y."/>
            <person name="Buehler E."/>
            <person name="Chan A."/>
            <person name="Chao Q."/>
            <person name="Chen H."/>
            <person name="Cheuk R.F."/>
            <person name="Chin C.W."/>
            <person name="Chung M.K."/>
            <person name="Conn L."/>
            <person name="Conway A.B."/>
            <person name="Conway A.R."/>
            <person name="Creasy T.H."/>
            <person name="Dewar K."/>
            <person name="Dunn P."/>
            <person name="Etgu P."/>
            <person name="Feldblyum T.V."/>
            <person name="Feng J.-D."/>
            <person name="Fong B."/>
            <person name="Fujii C.Y."/>
            <person name="Gill J.E."/>
            <person name="Goldsmith A.D."/>
            <person name="Haas B."/>
            <person name="Hansen N.F."/>
            <person name="Hughes B."/>
            <person name="Huizar L."/>
            <person name="Hunter J.L."/>
            <person name="Jenkins J."/>
            <person name="Johnson-Hopson C."/>
            <person name="Khan S."/>
            <person name="Khaykin E."/>
            <person name="Kim C.J."/>
            <person name="Koo H.L."/>
            <person name="Kremenetskaia I."/>
            <person name="Kurtz D.B."/>
            <person name="Kwan A."/>
            <person name="Lam B."/>
            <person name="Langin-Hooper S."/>
            <person name="Lee A."/>
            <person name="Lee J.M."/>
            <person name="Lenz C.A."/>
            <person name="Li J.H."/>
            <person name="Li Y.-P."/>
            <person name="Lin X."/>
            <person name="Liu S.X."/>
            <person name="Liu Z.A."/>
            <person name="Luros J.S."/>
            <person name="Maiti R."/>
            <person name="Marziali A."/>
            <person name="Militscher J."/>
            <person name="Miranda M."/>
            <person name="Nguyen M."/>
            <person name="Nierman W.C."/>
            <person name="Osborne B.I."/>
            <person name="Pai G."/>
            <person name="Peterson J."/>
            <person name="Pham P.K."/>
            <person name="Rizzo M."/>
            <person name="Rooney T."/>
            <person name="Rowley D."/>
            <person name="Sakano H."/>
            <person name="Salzberg S.L."/>
            <person name="Schwartz J.R."/>
            <person name="Shinn P."/>
            <person name="Southwick A.M."/>
            <person name="Sun H."/>
            <person name="Tallon L.J."/>
            <person name="Tambunga G."/>
            <person name="Toriumi M.J."/>
            <person name="Town C.D."/>
            <person name="Utterback T."/>
            <person name="Van Aken S."/>
            <person name="Vaysberg M."/>
            <person name="Vysotskaia V.S."/>
            <person name="Walker M."/>
            <person name="Wu D."/>
            <person name="Yu G."/>
            <person name="Fraser C.M."/>
            <person name="Venter J.C."/>
            <person name="Davis R.W."/>
        </authorList>
    </citation>
    <scope>NUCLEOTIDE SEQUENCE [LARGE SCALE GENOMIC DNA]</scope>
    <source>
        <strain>cv. Columbia</strain>
    </source>
</reference>
<reference key="2">
    <citation type="journal article" date="2017" name="Plant J.">
        <title>Araport11: a complete reannotation of the Arabidopsis thaliana reference genome.</title>
        <authorList>
            <person name="Cheng C.Y."/>
            <person name="Krishnakumar V."/>
            <person name="Chan A.P."/>
            <person name="Thibaud-Nissen F."/>
            <person name="Schobel S."/>
            <person name="Town C.D."/>
        </authorList>
    </citation>
    <scope>GENOME REANNOTATION</scope>
    <source>
        <strain>cv. Columbia</strain>
    </source>
</reference>
<reference key="3">
    <citation type="journal article" date="2009" name="DNA Res.">
        <title>Analysis of multiple occurrences of alternative splicing events in Arabidopsis thaliana using novel sequenced full-length cDNAs.</title>
        <authorList>
            <person name="Iida K."/>
            <person name="Fukami-Kobayashi K."/>
            <person name="Toyoda A."/>
            <person name="Sakaki Y."/>
            <person name="Kobayashi M."/>
            <person name="Seki M."/>
            <person name="Shinozaki K."/>
        </authorList>
    </citation>
    <scope>NUCLEOTIDE SEQUENCE [LARGE SCALE MRNA] (ISOFORM 1)</scope>
    <source>
        <strain>cv. Columbia</strain>
    </source>
</reference>
<reference key="4">
    <citation type="submission" date="2006-03" db="EMBL/GenBank/DDBJ databases">
        <title>Arabidopsis ORF clones.</title>
        <authorList>
            <person name="Shinn P."/>
            <person name="Chen H."/>
            <person name="Kim C.J."/>
            <person name="Ecker J.R."/>
        </authorList>
    </citation>
    <scope>NUCLEOTIDE SEQUENCE [LARGE SCALE MRNA] (ISOFORM 1)</scope>
    <source>
        <strain>cv. Columbia</strain>
    </source>
</reference>
<reference key="5">
    <citation type="submission" date="2002-03" db="EMBL/GenBank/DDBJ databases">
        <title>Full-length cDNA from Arabidopsis thaliana.</title>
        <authorList>
            <person name="Brover V.V."/>
            <person name="Troukhan M.E."/>
            <person name="Alexandrov N.A."/>
            <person name="Lu Y.-P."/>
            <person name="Flavell R.B."/>
            <person name="Feldmann K.A."/>
        </authorList>
    </citation>
    <scope>NUCLEOTIDE SEQUENCE [LARGE SCALE MRNA] (ISOFORM 1)</scope>
</reference>
<reference key="6">
    <citation type="journal article" date="2005" name="Plant J.">
        <title>Cell adhesion in Arabidopsis thaliana is mediated by ECTOPICALLY PARTING CELLS 1--a glycosyltransferase (GT64) related to the animal exostosins.</title>
        <authorList>
            <person name="Singh S.K."/>
            <person name="Eland C."/>
            <person name="Harholt J."/>
            <person name="Scheller H.V."/>
            <person name="Marchant A."/>
        </authorList>
    </citation>
    <scope>GENE FAMILY</scope>
</reference>
<reference key="7">
    <citation type="journal article" date="2014" name="Plant J.">
        <title>The plant glycosyltransferase clone collection for functional genomics.</title>
        <authorList>
            <person name="Lao J."/>
            <person name="Oikawa A."/>
            <person name="Bromley J.R."/>
            <person name="McInerney P."/>
            <person name="Suttangkakul A."/>
            <person name="Smith-Moritz A.M."/>
            <person name="Plahar H."/>
            <person name="Chiu T.-Y."/>
            <person name="Gonzalez Fernandez-Nino S.M.G."/>
            <person name="Ebert B."/>
            <person name="Yang F."/>
            <person name="Christiansen K.M."/>
            <person name="Hansen S.F."/>
            <person name="Stonebloom S."/>
            <person name="Adams P.D."/>
            <person name="Ronald P.C."/>
            <person name="Hillson N.J."/>
            <person name="Hadi M.Z."/>
            <person name="Vega-Sanchez M.E."/>
            <person name="Loque D."/>
            <person name="Scheller H.V."/>
            <person name="Heazlewood J.L."/>
        </authorList>
    </citation>
    <scope>WEB RESOURCE</scope>
    <scope>GENE FAMILY</scope>
    <source>
        <strain>cv. Columbia</strain>
    </source>
</reference>
<name>GT643_ARATH</name>
<organism evidence="9">
    <name type="scientific">Arabidopsis thaliana</name>
    <name type="common">Mouse-ear cress</name>
    <dbReference type="NCBI Taxonomy" id="3702"/>
    <lineage>
        <taxon>Eukaryota</taxon>
        <taxon>Viridiplantae</taxon>
        <taxon>Streptophyta</taxon>
        <taxon>Embryophyta</taxon>
        <taxon>Tracheophyta</taxon>
        <taxon>Spermatophyta</taxon>
        <taxon>Magnoliopsida</taxon>
        <taxon>eudicotyledons</taxon>
        <taxon>Gunneridae</taxon>
        <taxon>Pentapetalae</taxon>
        <taxon>rosids</taxon>
        <taxon>malvids</taxon>
        <taxon>Brassicales</taxon>
        <taxon>Brassicaceae</taxon>
        <taxon>Camelineae</taxon>
        <taxon>Arabidopsis</taxon>
    </lineage>
</organism>
<protein>
    <recommendedName>
        <fullName evidence="5">Glycosyltransferase family protein 64 C3</fullName>
        <shortName evidence="5">GT64 C3</shortName>
        <ecNumber evidence="6">2.4.1.-</ecNumber>
    </recommendedName>
</protein>